<protein>
    <recommendedName>
        <fullName evidence="1">Adenylosuccinate synthetase</fullName>
        <shortName evidence="1">AMPSase</shortName>
        <shortName evidence="1">AdSS</shortName>
        <ecNumber evidence="1">6.3.4.4</ecNumber>
    </recommendedName>
    <alternativeName>
        <fullName evidence="1">IMP--aspartate ligase</fullName>
    </alternativeName>
</protein>
<name>PURA_SYNS9</name>
<keyword id="KW-0963">Cytoplasm</keyword>
<keyword id="KW-0342">GTP-binding</keyword>
<keyword id="KW-0436">Ligase</keyword>
<keyword id="KW-0460">Magnesium</keyword>
<keyword id="KW-0479">Metal-binding</keyword>
<keyword id="KW-0547">Nucleotide-binding</keyword>
<keyword id="KW-0658">Purine biosynthesis</keyword>
<keyword id="KW-1185">Reference proteome</keyword>
<organism>
    <name type="scientific">Synechococcus sp. (strain CC9902)</name>
    <dbReference type="NCBI Taxonomy" id="316279"/>
    <lineage>
        <taxon>Bacteria</taxon>
        <taxon>Bacillati</taxon>
        <taxon>Cyanobacteriota</taxon>
        <taxon>Cyanophyceae</taxon>
        <taxon>Synechococcales</taxon>
        <taxon>Synechococcaceae</taxon>
        <taxon>Synechococcus</taxon>
    </lineage>
</organism>
<dbReference type="EC" id="6.3.4.4" evidence="1"/>
<dbReference type="EMBL" id="CP000097">
    <property type="protein sequence ID" value="ABB26625.1"/>
    <property type="molecule type" value="Genomic_DNA"/>
</dbReference>
<dbReference type="SMR" id="Q3AWR7"/>
<dbReference type="STRING" id="316279.Syncc9902_1667"/>
<dbReference type="KEGG" id="sye:Syncc9902_1667"/>
<dbReference type="eggNOG" id="COG0104">
    <property type="taxonomic scope" value="Bacteria"/>
</dbReference>
<dbReference type="HOGENOM" id="CLU_029848_0_0_3"/>
<dbReference type="UniPathway" id="UPA00075">
    <property type="reaction ID" value="UER00335"/>
</dbReference>
<dbReference type="Proteomes" id="UP000002712">
    <property type="component" value="Chromosome"/>
</dbReference>
<dbReference type="GO" id="GO:0005737">
    <property type="term" value="C:cytoplasm"/>
    <property type="evidence" value="ECO:0007669"/>
    <property type="project" value="UniProtKB-SubCell"/>
</dbReference>
<dbReference type="GO" id="GO:0004019">
    <property type="term" value="F:adenylosuccinate synthase activity"/>
    <property type="evidence" value="ECO:0007669"/>
    <property type="project" value="UniProtKB-UniRule"/>
</dbReference>
<dbReference type="GO" id="GO:0005525">
    <property type="term" value="F:GTP binding"/>
    <property type="evidence" value="ECO:0007669"/>
    <property type="project" value="UniProtKB-UniRule"/>
</dbReference>
<dbReference type="GO" id="GO:0000287">
    <property type="term" value="F:magnesium ion binding"/>
    <property type="evidence" value="ECO:0007669"/>
    <property type="project" value="UniProtKB-UniRule"/>
</dbReference>
<dbReference type="GO" id="GO:0044208">
    <property type="term" value="P:'de novo' AMP biosynthetic process"/>
    <property type="evidence" value="ECO:0007669"/>
    <property type="project" value="UniProtKB-UniRule"/>
</dbReference>
<dbReference type="GO" id="GO:0046040">
    <property type="term" value="P:IMP metabolic process"/>
    <property type="evidence" value="ECO:0007669"/>
    <property type="project" value="TreeGrafter"/>
</dbReference>
<dbReference type="CDD" id="cd03108">
    <property type="entry name" value="AdSS"/>
    <property type="match status" value="1"/>
</dbReference>
<dbReference type="FunFam" id="1.10.300.10:FF:000001">
    <property type="entry name" value="Adenylosuccinate synthetase"/>
    <property type="match status" value="1"/>
</dbReference>
<dbReference type="FunFam" id="3.90.170.10:FF:000001">
    <property type="entry name" value="Adenylosuccinate synthetase"/>
    <property type="match status" value="1"/>
</dbReference>
<dbReference type="Gene3D" id="3.40.440.10">
    <property type="entry name" value="Adenylosuccinate Synthetase, subunit A, domain 1"/>
    <property type="match status" value="1"/>
</dbReference>
<dbReference type="Gene3D" id="1.10.300.10">
    <property type="entry name" value="Adenylosuccinate Synthetase, subunit A, domain 2"/>
    <property type="match status" value="1"/>
</dbReference>
<dbReference type="Gene3D" id="3.90.170.10">
    <property type="entry name" value="Adenylosuccinate Synthetase, subunit A, domain 3"/>
    <property type="match status" value="1"/>
</dbReference>
<dbReference type="HAMAP" id="MF_00011">
    <property type="entry name" value="Adenylosucc_synth"/>
    <property type="match status" value="1"/>
</dbReference>
<dbReference type="InterPro" id="IPR018220">
    <property type="entry name" value="Adenylosuccin_syn_GTP-bd"/>
</dbReference>
<dbReference type="InterPro" id="IPR033128">
    <property type="entry name" value="Adenylosuccin_syn_Lys_AS"/>
</dbReference>
<dbReference type="InterPro" id="IPR042109">
    <property type="entry name" value="Adenylosuccinate_synth_dom1"/>
</dbReference>
<dbReference type="InterPro" id="IPR042110">
    <property type="entry name" value="Adenylosuccinate_synth_dom2"/>
</dbReference>
<dbReference type="InterPro" id="IPR042111">
    <property type="entry name" value="Adenylosuccinate_synth_dom3"/>
</dbReference>
<dbReference type="InterPro" id="IPR001114">
    <property type="entry name" value="Adenylosuccinate_synthetase"/>
</dbReference>
<dbReference type="InterPro" id="IPR027417">
    <property type="entry name" value="P-loop_NTPase"/>
</dbReference>
<dbReference type="NCBIfam" id="NF002223">
    <property type="entry name" value="PRK01117.1"/>
    <property type="match status" value="1"/>
</dbReference>
<dbReference type="NCBIfam" id="TIGR00184">
    <property type="entry name" value="purA"/>
    <property type="match status" value="1"/>
</dbReference>
<dbReference type="PANTHER" id="PTHR11846">
    <property type="entry name" value="ADENYLOSUCCINATE SYNTHETASE"/>
    <property type="match status" value="1"/>
</dbReference>
<dbReference type="PANTHER" id="PTHR11846:SF0">
    <property type="entry name" value="ADENYLOSUCCINATE SYNTHETASE"/>
    <property type="match status" value="1"/>
</dbReference>
<dbReference type="Pfam" id="PF00709">
    <property type="entry name" value="Adenylsucc_synt"/>
    <property type="match status" value="1"/>
</dbReference>
<dbReference type="SMART" id="SM00788">
    <property type="entry name" value="Adenylsucc_synt"/>
    <property type="match status" value="1"/>
</dbReference>
<dbReference type="SUPFAM" id="SSF52540">
    <property type="entry name" value="P-loop containing nucleoside triphosphate hydrolases"/>
    <property type="match status" value="1"/>
</dbReference>
<dbReference type="PROSITE" id="PS01266">
    <property type="entry name" value="ADENYLOSUCCIN_SYN_1"/>
    <property type="match status" value="1"/>
</dbReference>
<dbReference type="PROSITE" id="PS00513">
    <property type="entry name" value="ADENYLOSUCCIN_SYN_2"/>
    <property type="match status" value="1"/>
</dbReference>
<sequence length="439" mass="47814">MSLANVVVIGAQWGDEGKGKITDLLSRSADVVVRYQGGVNAGHTIVVDGRVLKLHLIPSGILYPDTICLIGPGTVVDPKVMLGELDMLLANDIDISGLRLASSAHVTMPYHRLLDLAMEKQRGDRRIGTTGRGIGPTYADKSQRSGIRVIDLLDEQRLRNRLEGPLTEKNELLEKIYGIEPLDGEAVIQEYLGYGQRLSKHVVDCTRAIHSAAKARKNILFEGAQGTLLDLDHGTYPYVTSSNPVSGGACIGAGVGPTLIDRVIGVAKAYTTRVGEGPFPTELSGSLNDQLTERGGEFGTTTGRRRRCGWFDGVIGRYAVQVNGLDCLAITKLDVLDEMDEIQVCVAYELDGERIEYFPSSSDDFARCKPIFETMKGWQCSTEECRKLEDLPKAAMDYLRFLADLMEVPIAIVSLGASRDQTIVVEDPIHGPKRALLSA</sequence>
<reference key="1">
    <citation type="submission" date="2005-08" db="EMBL/GenBank/DDBJ databases">
        <title>Complete sequence of Synechococcus sp. CC9902.</title>
        <authorList>
            <person name="Copeland A."/>
            <person name="Lucas S."/>
            <person name="Lapidus A."/>
            <person name="Barry K."/>
            <person name="Detter J.C."/>
            <person name="Glavina T."/>
            <person name="Hammon N."/>
            <person name="Israni S."/>
            <person name="Pitluck S."/>
            <person name="Martinez M."/>
            <person name="Schmutz J."/>
            <person name="Larimer F."/>
            <person name="Land M."/>
            <person name="Kyrpides N."/>
            <person name="Ivanova N."/>
            <person name="Richardson P."/>
        </authorList>
    </citation>
    <scope>NUCLEOTIDE SEQUENCE [LARGE SCALE GENOMIC DNA]</scope>
    <source>
        <strain>CC9902</strain>
    </source>
</reference>
<evidence type="ECO:0000255" key="1">
    <source>
        <dbReference type="HAMAP-Rule" id="MF_00011"/>
    </source>
</evidence>
<comment type="function">
    <text evidence="1">Plays an important role in the de novo pathway of purine nucleotide biosynthesis. Catalyzes the first committed step in the biosynthesis of AMP from IMP.</text>
</comment>
<comment type="catalytic activity">
    <reaction evidence="1">
        <text>IMP + L-aspartate + GTP = N(6)-(1,2-dicarboxyethyl)-AMP + GDP + phosphate + 2 H(+)</text>
        <dbReference type="Rhea" id="RHEA:15753"/>
        <dbReference type="ChEBI" id="CHEBI:15378"/>
        <dbReference type="ChEBI" id="CHEBI:29991"/>
        <dbReference type="ChEBI" id="CHEBI:37565"/>
        <dbReference type="ChEBI" id="CHEBI:43474"/>
        <dbReference type="ChEBI" id="CHEBI:57567"/>
        <dbReference type="ChEBI" id="CHEBI:58053"/>
        <dbReference type="ChEBI" id="CHEBI:58189"/>
        <dbReference type="EC" id="6.3.4.4"/>
    </reaction>
</comment>
<comment type="cofactor">
    <cofactor evidence="1">
        <name>Mg(2+)</name>
        <dbReference type="ChEBI" id="CHEBI:18420"/>
    </cofactor>
    <text evidence="1">Binds 1 Mg(2+) ion per subunit.</text>
</comment>
<comment type="pathway">
    <text evidence="1">Purine metabolism; AMP biosynthesis via de novo pathway; AMP from IMP: step 1/2.</text>
</comment>
<comment type="subunit">
    <text evidence="1">Homodimer.</text>
</comment>
<comment type="subcellular location">
    <subcellularLocation>
        <location evidence="1">Cytoplasm</location>
    </subcellularLocation>
</comment>
<comment type="similarity">
    <text evidence="1">Belongs to the adenylosuccinate synthetase family.</text>
</comment>
<accession>Q3AWR7</accession>
<gene>
    <name evidence="1" type="primary">purA</name>
    <name type="ordered locus">Syncc9902_1667</name>
</gene>
<proteinExistence type="inferred from homology"/>
<feature type="chain" id="PRO_0000321812" description="Adenylosuccinate synthetase">
    <location>
        <begin position="1"/>
        <end position="439"/>
    </location>
</feature>
<feature type="active site" description="Proton acceptor" evidence="1">
    <location>
        <position position="15"/>
    </location>
</feature>
<feature type="active site" description="Proton donor" evidence="1">
    <location>
        <position position="43"/>
    </location>
</feature>
<feature type="binding site" evidence="1">
    <location>
        <begin position="14"/>
        <end position="20"/>
    </location>
    <ligand>
        <name>GTP</name>
        <dbReference type="ChEBI" id="CHEBI:37565"/>
    </ligand>
</feature>
<feature type="binding site" description="in other chain" evidence="1">
    <location>
        <begin position="15"/>
        <end position="18"/>
    </location>
    <ligand>
        <name>IMP</name>
        <dbReference type="ChEBI" id="CHEBI:58053"/>
        <note>ligand shared between dimeric partners</note>
    </ligand>
</feature>
<feature type="binding site" evidence="1">
    <location>
        <position position="15"/>
    </location>
    <ligand>
        <name>Mg(2+)</name>
        <dbReference type="ChEBI" id="CHEBI:18420"/>
    </ligand>
</feature>
<feature type="binding site" description="in other chain" evidence="1">
    <location>
        <begin position="40"/>
        <end position="43"/>
    </location>
    <ligand>
        <name>IMP</name>
        <dbReference type="ChEBI" id="CHEBI:58053"/>
        <note>ligand shared between dimeric partners</note>
    </ligand>
</feature>
<feature type="binding site" evidence="1">
    <location>
        <begin position="42"/>
        <end position="44"/>
    </location>
    <ligand>
        <name>GTP</name>
        <dbReference type="ChEBI" id="CHEBI:37565"/>
    </ligand>
</feature>
<feature type="binding site" evidence="1">
    <location>
        <position position="42"/>
    </location>
    <ligand>
        <name>Mg(2+)</name>
        <dbReference type="ChEBI" id="CHEBI:18420"/>
    </ligand>
</feature>
<feature type="binding site" description="in other chain" evidence="1">
    <location>
        <position position="130"/>
    </location>
    <ligand>
        <name>IMP</name>
        <dbReference type="ChEBI" id="CHEBI:58053"/>
        <note>ligand shared between dimeric partners</note>
    </ligand>
</feature>
<feature type="binding site" evidence="1">
    <location>
        <position position="144"/>
    </location>
    <ligand>
        <name>IMP</name>
        <dbReference type="ChEBI" id="CHEBI:58053"/>
        <note>ligand shared between dimeric partners</note>
    </ligand>
</feature>
<feature type="binding site" description="in other chain" evidence="1">
    <location>
        <position position="225"/>
    </location>
    <ligand>
        <name>IMP</name>
        <dbReference type="ChEBI" id="CHEBI:58053"/>
        <note>ligand shared between dimeric partners</note>
    </ligand>
</feature>
<feature type="binding site" description="in other chain" evidence="1">
    <location>
        <position position="240"/>
    </location>
    <ligand>
        <name>IMP</name>
        <dbReference type="ChEBI" id="CHEBI:58053"/>
        <note>ligand shared between dimeric partners</note>
    </ligand>
</feature>
<feature type="binding site" evidence="1">
    <location>
        <begin position="300"/>
        <end position="306"/>
    </location>
    <ligand>
        <name>substrate</name>
    </ligand>
</feature>
<feature type="binding site" description="in other chain" evidence="1">
    <location>
        <position position="304"/>
    </location>
    <ligand>
        <name>IMP</name>
        <dbReference type="ChEBI" id="CHEBI:58053"/>
        <note>ligand shared between dimeric partners</note>
    </ligand>
</feature>
<feature type="binding site" evidence="1">
    <location>
        <position position="306"/>
    </location>
    <ligand>
        <name>GTP</name>
        <dbReference type="ChEBI" id="CHEBI:37565"/>
    </ligand>
</feature>
<feature type="binding site" evidence="1">
    <location>
        <begin position="332"/>
        <end position="334"/>
    </location>
    <ligand>
        <name>GTP</name>
        <dbReference type="ChEBI" id="CHEBI:37565"/>
    </ligand>
</feature>
<feature type="binding site" evidence="1">
    <location>
        <begin position="414"/>
        <end position="416"/>
    </location>
    <ligand>
        <name>GTP</name>
        <dbReference type="ChEBI" id="CHEBI:37565"/>
    </ligand>
</feature>